<proteinExistence type="evidence at protein level"/>
<feature type="chain" id="PRO_0000049550" description="Uncharacterized protein YhaP">
    <location>
        <begin position="1"/>
        <end position="419"/>
    </location>
</feature>
<feature type="transmembrane region" description="Helical" evidence="1">
    <location>
        <begin position="16"/>
        <end position="36"/>
    </location>
</feature>
<feature type="transmembrane region" description="Helical" evidence="1">
    <location>
        <begin position="186"/>
        <end position="206"/>
    </location>
</feature>
<feature type="transmembrane region" description="Helical" evidence="1">
    <location>
        <begin position="235"/>
        <end position="255"/>
    </location>
</feature>
<feature type="transmembrane region" description="Helical" evidence="1">
    <location>
        <begin position="283"/>
        <end position="303"/>
    </location>
</feature>
<feature type="transmembrane region" description="Helical" evidence="1">
    <location>
        <begin position="318"/>
        <end position="338"/>
    </location>
</feature>
<feature type="transmembrane region" description="Helical" evidence="1">
    <location>
        <begin position="340"/>
        <end position="360"/>
    </location>
</feature>
<feature type="transmembrane region" description="Helical" evidence="1">
    <location>
        <begin position="369"/>
        <end position="389"/>
    </location>
</feature>
<feature type="sequence conflict" description="In Ref. 1; CAA74423." evidence="2" ref="1">
    <original>G</original>
    <variation>A</variation>
    <location>
        <position position="271"/>
    </location>
</feature>
<feature type="sequence conflict" description="In Ref. 1; CAA74423." evidence="2" ref="1">
    <original>G</original>
    <variation>A</variation>
    <location>
        <position position="293"/>
    </location>
</feature>
<feature type="sequence conflict" description="In Ref. 1; CAA74423." evidence="2" ref="1">
    <original>L</original>
    <variation>S</variation>
    <location>
        <position position="296"/>
    </location>
</feature>
<feature type="sequence conflict" description="In Ref. 1; CAA74423." evidence="2" ref="1">
    <original>F</original>
    <variation>V</variation>
    <location>
        <position position="359"/>
    </location>
</feature>
<comment type="interaction">
    <interactant intactId="EBI-5242593">
        <id>O07523</id>
    </interactant>
    <interactant intactId="EBI-5242442">
        <id>O31501</id>
        <label>swrC</label>
    </interactant>
    <organismsDiffer>false</organismsDiffer>
    <experiments>4</experiments>
</comment>
<comment type="subcellular location">
    <subcellularLocation>
        <location evidence="2">Cell membrane</location>
        <topology evidence="2">Multi-pass membrane protein</topology>
    </subcellularLocation>
</comment>
<comment type="similarity">
    <text evidence="2">To M.jannaschii MJ1024.</text>
</comment>
<keyword id="KW-1003">Cell membrane</keyword>
<keyword id="KW-0472">Membrane</keyword>
<keyword id="KW-1185">Reference proteome</keyword>
<keyword id="KW-0812">Transmembrane</keyword>
<keyword id="KW-1133">Transmembrane helix</keyword>
<evidence type="ECO:0000255" key="1"/>
<evidence type="ECO:0000305" key="2"/>
<sequence length="419" mass="45476">MNKFWIMLSHTYKNKIMAKSFIISTVITVLLVLVVTNLESIISLFQGDDAKEKIAVVDETNELYPVFSKQLKAVDTDGDLDVKLSKQSEDEVTKQVKDESLDGMLIIKRDEKGTISGTYKALTISDESTYQTLQQALTQTKTAVGTAELGVSQETISSLYAPVTVGQKALKEGAKSEEELGQTVGLVYIMLFVIYFSVIMYASMIAMEVATEKSSRVMEILISSMPPIQQMFAKLLGIGLVGITQLAIIIGAGSLSLKLNQKSETASSVGGFLNLTDVSATTVIYAVIFFLLGYFLYATLAAFLGSVVSRIEDVQQTITPMTLLVVAGFMIAMFGLNAPDAGFITVTSFIPFFTPMIMFLRVGMLDIPFWQAAVGIGITLLTIVILAVIGARIYKGGVLIYGNSSAFKAIKQALRLAKN</sequence>
<name>YHAP_BACSU</name>
<organism>
    <name type="scientific">Bacillus subtilis (strain 168)</name>
    <dbReference type="NCBI Taxonomy" id="224308"/>
    <lineage>
        <taxon>Bacteria</taxon>
        <taxon>Bacillati</taxon>
        <taxon>Bacillota</taxon>
        <taxon>Bacilli</taxon>
        <taxon>Bacillales</taxon>
        <taxon>Bacillaceae</taxon>
        <taxon>Bacillus</taxon>
    </lineage>
</organism>
<protein>
    <recommendedName>
        <fullName>Uncharacterized protein YhaP</fullName>
    </recommendedName>
</protein>
<gene>
    <name type="primary">yhaP</name>
    <name type="ordered locus">BSU09900</name>
</gene>
<reference key="1">
    <citation type="journal article" date="1998" name="Microbiology">
        <title>The 172 kb prkA-addAB region from 83 degrees to 97 degrees of the Bacillus subtilis chromosome contains several dysfunctional genes, the glyB marker, many genes encoding transporter proteins, and the ubiquitous hit gene.</title>
        <authorList>
            <person name="Noback M.A."/>
            <person name="Holsappel S."/>
            <person name="Kiewiet R."/>
            <person name="Terpstra P."/>
            <person name="Wambutt R."/>
            <person name="Wedler H."/>
            <person name="Venema G."/>
            <person name="Bron S."/>
        </authorList>
    </citation>
    <scope>NUCLEOTIDE SEQUENCE [GENOMIC DNA]</scope>
    <source>
        <strain>168</strain>
    </source>
</reference>
<reference key="2">
    <citation type="journal article" date="1997" name="Nature">
        <title>The complete genome sequence of the Gram-positive bacterium Bacillus subtilis.</title>
        <authorList>
            <person name="Kunst F."/>
            <person name="Ogasawara N."/>
            <person name="Moszer I."/>
            <person name="Albertini A.M."/>
            <person name="Alloni G."/>
            <person name="Azevedo V."/>
            <person name="Bertero M.G."/>
            <person name="Bessieres P."/>
            <person name="Bolotin A."/>
            <person name="Borchert S."/>
            <person name="Borriss R."/>
            <person name="Boursier L."/>
            <person name="Brans A."/>
            <person name="Braun M."/>
            <person name="Brignell S.C."/>
            <person name="Bron S."/>
            <person name="Brouillet S."/>
            <person name="Bruschi C.V."/>
            <person name="Caldwell B."/>
            <person name="Capuano V."/>
            <person name="Carter N.M."/>
            <person name="Choi S.-K."/>
            <person name="Codani J.-J."/>
            <person name="Connerton I.F."/>
            <person name="Cummings N.J."/>
            <person name="Daniel R.A."/>
            <person name="Denizot F."/>
            <person name="Devine K.M."/>
            <person name="Duesterhoeft A."/>
            <person name="Ehrlich S.D."/>
            <person name="Emmerson P.T."/>
            <person name="Entian K.-D."/>
            <person name="Errington J."/>
            <person name="Fabret C."/>
            <person name="Ferrari E."/>
            <person name="Foulger D."/>
            <person name="Fritz C."/>
            <person name="Fujita M."/>
            <person name="Fujita Y."/>
            <person name="Fuma S."/>
            <person name="Galizzi A."/>
            <person name="Galleron N."/>
            <person name="Ghim S.-Y."/>
            <person name="Glaser P."/>
            <person name="Goffeau A."/>
            <person name="Golightly E.J."/>
            <person name="Grandi G."/>
            <person name="Guiseppi G."/>
            <person name="Guy B.J."/>
            <person name="Haga K."/>
            <person name="Haiech J."/>
            <person name="Harwood C.R."/>
            <person name="Henaut A."/>
            <person name="Hilbert H."/>
            <person name="Holsappel S."/>
            <person name="Hosono S."/>
            <person name="Hullo M.-F."/>
            <person name="Itaya M."/>
            <person name="Jones L.-M."/>
            <person name="Joris B."/>
            <person name="Karamata D."/>
            <person name="Kasahara Y."/>
            <person name="Klaerr-Blanchard M."/>
            <person name="Klein C."/>
            <person name="Kobayashi Y."/>
            <person name="Koetter P."/>
            <person name="Koningstein G."/>
            <person name="Krogh S."/>
            <person name="Kumano M."/>
            <person name="Kurita K."/>
            <person name="Lapidus A."/>
            <person name="Lardinois S."/>
            <person name="Lauber J."/>
            <person name="Lazarevic V."/>
            <person name="Lee S.-M."/>
            <person name="Levine A."/>
            <person name="Liu H."/>
            <person name="Masuda S."/>
            <person name="Mauel C."/>
            <person name="Medigue C."/>
            <person name="Medina N."/>
            <person name="Mellado R.P."/>
            <person name="Mizuno M."/>
            <person name="Moestl D."/>
            <person name="Nakai S."/>
            <person name="Noback M."/>
            <person name="Noone D."/>
            <person name="O'Reilly M."/>
            <person name="Ogawa K."/>
            <person name="Ogiwara A."/>
            <person name="Oudega B."/>
            <person name="Park S.-H."/>
            <person name="Parro V."/>
            <person name="Pohl T.M."/>
            <person name="Portetelle D."/>
            <person name="Porwollik S."/>
            <person name="Prescott A.M."/>
            <person name="Presecan E."/>
            <person name="Pujic P."/>
            <person name="Purnelle B."/>
            <person name="Rapoport G."/>
            <person name="Rey M."/>
            <person name="Reynolds S."/>
            <person name="Rieger M."/>
            <person name="Rivolta C."/>
            <person name="Rocha E."/>
            <person name="Roche B."/>
            <person name="Rose M."/>
            <person name="Sadaie Y."/>
            <person name="Sato T."/>
            <person name="Scanlan E."/>
            <person name="Schleich S."/>
            <person name="Schroeter R."/>
            <person name="Scoffone F."/>
            <person name="Sekiguchi J."/>
            <person name="Sekowska A."/>
            <person name="Seror S.J."/>
            <person name="Serror P."/>
            <person name="Shin B.-S."/>
            <person name="Soldo B."/>
            <person name="Sorokin A."/>
            <person name="Tacconi E."/>
            <person name="Takagi T."/>
            <person name="Takahashi H."/>
            <person name="Takemaru K."/>
            <person name="Takeuchi M."/>
            <person name="Tamakoshi A."/>
            <person name="Tanaka T."/>
            <person name="Terpstra P."/>
            <person name="Tognoni A."/>
            <person name="Tosato V."/>
            <person name="Uchiyama S."/>
            <person name="Vandenbol M."/>
            <person name="Vannier F."/>
            <person name="Vassarotti A."/>
            <person name="Viari A."/>
            <person name="Wambutt R."/>
            <person name="Wedler E."/>
            <person name="Wedler H."/>
            <person name="Weitzenegger T."/>
            <person name="Winters P."/>
            <person name="Wipat A."/>
            <person name="Yamamoto H."/>
            <person name="Yamane K."/>
            <person name="Yasumoto K."/>
            <person name="Yata K."/>
            <person name="Yoshida K."/>
            <person name="Yoshikawa H.-F."/>
            <person name="Zumstein E."/>
            <person name="Yoshikawa H."/>
            <person name="Danchin A."/>
        </authorList>
    </citation>
    <scope>NUCLEOTIDE SEQUENCE [LARGE SCALE GENOMIC DNA]</scope>
    <source>
        <strain>168</strain>
    </source>
</reference>
<reference key="3">
    <citation type="journal article" date="2009" name="Microbiology">
        <title>From a consortium sequence to a unified sequence: the Bacillus subtilis 168 reference genome a decade later.</title>
        <authorList>
            <person name="Barbe V."/>
            <person name="Cruveiller S."/>
            <person name="Kunst F."/>
            <person name="Lenoble P."/>
            <person name="Meurice G."/>
            <person name="Sekowska A."/>
            <person name="Vallenet D."/>
            <person name="Wang T."/>
            <person name="Moszer I."/>
            <person name="Medigue C."/>
            <person name="Danchin A."/>
        </authorList>
    </citation>
    <scope>SEQUENCE REVISION TO 271; 293; 296 AND 359</scope>
</reference>
<accession>O07523</accession>
<dbReference type="EMBL" id="Y14078">
    <property type="protein sequence ID" value="CAA74423.1"/>
    <property type="molecule type" value="Genomic_DNA"/>
</dbReference>
<dbReference type="EMBL" id="AL009126">
    <property type="protein sequence ID" value="CAB12830.2"/>
    <property type="molecule type" value="Genomic_DNA"/>
</dbReference>
<dbReference type="PIR" id="B69819">
    <property type="entry name" value="B69819"/>
</dbReference>
<dbReference type="RefSeq" id="NP_388871.2">
    <property type="nucleotide sequence ID" value="NC_000964.3"/>
</dbReference>
<dbReference type="RefSeq" id="WP_003244912.1">
    <property type="nucleotide sequence ID" value="NZ_OZ025638.1"/>
</dbReference>
<dbReference type="SMR" id="O07523"/>
<dbReference type="FunCoup" id="O07523">
    <property type="interactions" value="36"/>
</dbReference>
<dbReference type="IntAct" id="O07523">
    <property type="interactions" value="54"/>
</dbReference>
<dbReference type="STRING" id="224308.BSU09900"/>
<dbReference type="PaxDb" id="224308-BSU09900"/>
<dbReference type="EnsemblBacteria" id="CAB12830">
    <property type="protein sequence ID" value="CAB12830"/>
    <property type="gene ID" value="BSU_09900"/>
</dbReference>
<dbReference type="GeneID" id="939763"/>
<dbReference type="KEGG" id="bsu:BSU09900"/>
<dbReference type="PATRIC" id="fig|224308.179.peg.1063"/>
<dbReference type="eggNOG" id="COG1668">
    <property type="taxonomic scope" value="Bacteria"/>
</dbReference>
<dbReference type="InParanoid" id="O07523"/>
<dbReference type="OrthoDB" id="9768837at2"/>
<dbReference type="PhylomeDB" id="O07523"/>
<dbReference type="BioCyc" id="BSUB:BSU09900-MONOMER"/>
<dbReference type="Proteomes" id="UP000001570">
    <property type="component" value="Chromosome"/>
</dbReference>
<dbReference type="GO" id="GO:0005886">
    <property type="term" value="C:plasma membrane"/>
    <property type="evidence" value="ECO:0007669"/>
    <property type="project" value="UniProtKB-SubCell"/>
</dbReference>
<dbReference type="GO" id="GO:0140359">
    <property type="term" value="F:ABC-type transporter activity"/>
    <property type="evidence" value="ECO:0007669"/>
    <property type="project" value="InterPro"/>
</dbReference>
<dbReference type="InterPro" id="IPR051449">
    <property type="entry name" value="ABC-2_transporter_component"/>
</dbReference>
<dbReference type="InterPro" id="IPR013525">
    <property type="entry name" value="ABC2_TM"/>
</dbReference>
<dbReference type="PANTHER" id="PTHR30294">
    <property type="entry name" value="MEMBRANE COMPONENT OF ABC TRANSPORTER YHHJ-RELATED"/>
    <property type="match status" value="1"/>
</dbReference>
<dbReference type="PANTHER" id="PTHR30294:SF29">
    <property type="entry name" value="MULTIDRUG ABC TRANSPORTER PERMEASE YBHS-RELATED"/>
    <property type="match status" value="1"/>
</dbReference>
<dbReference type="Pfam" id="PF12698">
    <property type="entry name" value="ABC2_membrane_3"/>
    <property type="match status" value="1"/>
</dbReference>